<comment type="function">
    <text evidence="1">Enzyme of the plastid non-mevalonate pathway for isoprenoid biosynthesis that catalyzes the phosphorylation of the position 2 hydroxy group of 4-diphosphocytidyl-2C-methyl-D-erythritol. Is essential for chloroplast development (By similarity).</text>
</comment>
<comment type="catalytic activity">
    <reaction>
        <text>4-CDP-2-C-methyl-D-erythritol + ATP = 4-CDP-2-C-methyl-D-erythritol 2-phosphate + ADP + H(+)</text>
        <dbReference type="Rhea" id="RHEA:18437"/>
        <dbReference type="ChEBI" id="CHEBI:15378"/>
        <dbReference type="ChEBI" id="CHEBI:30616"/>
        <dbReference type="ChEBI" id="CHEBI:57823"/>
        <dbReference type="ChEBI" id="CHEBI:57919"/>
        <dbReference type="ChEBI" id="CHEBI:456216"/>
        <dbReference type="EC" id="2.7.1.148"/>
    </reaction>
</comment>
<comment type="pathway">
    <text>Isoprenoid biosynthesis; isopentenyl diphosphate biosynthesis via DXP pathway; isopentenyl diphosphate from 1-deoxy-D-xylulose 5-phosphate: step 3/6.</text>
</comment>
<comment type="subcellular location">
    <subcellularLocation>
        <location evidence="1">Plastid</location>
        <location evidence="1">Chloroplast stroma</location>
    </subcellularLocation>
</comment>
<comment type="similarity">
    <text evidence="3">Belongs to the GHMP kinase family. IspE subfamily.</text>
</comment>
<evidence type="ECO:0000250" key="1"/>
<evidence type="ECO:0000255" key="2"/>
<evidence type="ECO:0000305" key="3"/>
<keyword id="KW-0067">ATP-binding</keyword>
<keyword id="KW-0150">Chloroplast</keyword>
<keyword id="KW-0414">Isoprene biosynthesis</keyword>
<keyword id="KW-0418">Kinase</keyword>
<keyword id="KW-0547">Nucleotide-binding</keyword>
<keyword id="KW-0934">Plastid</keyword>
<keyword id="KW-1185">Reference proteome</keyword>
<keyword id="KW-0808">Transferase</keyword>
<keyword id="KW-0809">Transit peptide</keyword>
<sequence>MACSTHLLSQSLYPLNRANPAAARGHLRFQASPSVRLGSGTSRRRALGLRVAASAEQGRRQVEVEYDLQAKFNKLADQIDQNAGITRLNLFSPCKINVFLRITGKRPDGFHDLASLFHVISLGDTIKFSLSPSKSKDRLSTNVAGVPVDESNLIIKALNLYRKKTGTDNFFWIHLDKKVPTGAGLGGGSSNAATALWAANQFSGCIASEKELQEWSGEIGSDIPFFFSQGAAYCTGRGEIVEDIRNPLPANLPMVLVKPPEACSTAEVYKRLRLEHTSQTDPLVLLKEITENGISQDACVNDLEPPAFEVLPSLKRLKKRIIAANRGDYDAVFMSGSGSTIVGIGSPDPPAFVYDDDDYKDTFVSEACFLTRNENEWYREPISSKITSEEDLPPEVASVSD</sequence>
<feature type="transit peptide" description="Chloroplast" evidence="2">
    <location>
        <begin position="1"/>
        <end position="52"/>
    </location>
</feature>
<feature type="chain" id="PRO_0000417596" description="4-diphosphocytidyl-2-C-methyl-D-erythritol kinase, chloroplastic">
    <location>
        <begin position="53"/>
        <end position="401"/>
    </location>
</feature>
<feature type="binding site" evidence="2">
    <location>
        <begin position="180"/>
        <end position="190"/>
    </location>
    <ligand>
        <name>ATP</name>
        <dbReference type="ChEBI" id="CHEBI:30616"/>
    </ligand>
</feature>
<dbReference type="EC" id="2.7.1.148"/>
<dbReference type="EMBL" id="AP003221">
    <property type="protein sequence ID" value="BAB86428.1"/>
    <property type="molecule type" value="Genomic_DNA"/>
</dbReference>
<dbReference type="EMBL" id="AP008207">
    <property type="protein sequence ID" value="BAF06458.1"/>
    <property type="molecule type" value="Genomic_DNA"/>
</dbReference>
<dbReference type="EMBL" id="AP014957">
    <property type="protein sequence ID" value="BAS74806.1"/>
    <property type="molecule type" value="Genomic_DNA"/>
</dbReference>
<dbReference type="EMBL" id="CM000138">
    <property type="protein sequence ID" value="EAZ11943.1"/>
    <property type="molecule type" value="Genomic_DNA"/>
</dbReference>
<dbReference type="EMBL" id="AK067589">
    <property type="protein sequence ID" value="BAG90487.1"/>
    <property type="molecule type" value="mRNA"/>
</dbReference>
<dbReference type="RefSeq" id="XP_015622133.1">
    <property type="nucleotide sequence ID" value="XM_015766647.1"/>
</dbReference>
<dbReference type="SMR" id="Q8S2G0"/>
<dbReference type="FunCoup" id="Q8S2G0">
    <property type="interactions" value="488"/>
</dbReference>
<dbReference type="STRING" id="39947.Q8S2G0"/>
<dbReference type="PaxDb" id="39947-Q8S2G0"/>
<dbReference type="EnsemblPlants" id="Os01t0802100-01">
    <property type="protein sequence ID" value="Os01t0802100-01"/>
    <property type="gene ID" value="Os01g0802100"/>
</dbReference>
<dbReference type="Gramene" id="Os01t0802100-01">
    <property type="protein sequence ID" value="Os01t0802100-01"/>
    <property type="gene ID" value="Os01g0802100"/>
</dbReference>
<dbReference type="KEGG" id="dosa:Os01g0802100"/>
<dbReference type="eggNOG" id="ENOG502QT9C">
    <property type="taxonomic scope" value="Eukaryota"/>
</dbReference>
<dbReference type="HOGENOM" id="CLU_053057_0_0_1"/>
<dbReference type="InParanoid" id="Q8S2G0"/>
<dbReference type="OMA" id="ACDALWG"/>
<dbReference type="OrthoDB" id="3191556at2759"/>
<dbReference type="PlantReactome" id="R-OSA-1119464">
    <property type="pathway name" value="Methylerythritol phosphate pathway"/>
</dbReference>
<dbReference type="UniPathway" id="UPA00056">
    <property type="reaction ID" value="UER00094"/>
</dbReference>
<dbReference type="Proteomes" id="UP000000763">
    <property type="component" value="Chromosome 1"/>
</dbReference>
<dbReference type="Proteomes" id="UP000007752">
    <property type="component" value="Chromosome 1"/>
</dbReference>
<dbReference type="Proteomes" id="UP000059680">
    <property type="component" value="Chromosome 1"/>
</dbReference>
<dbReference type="GO" id="GO:0009570">
    <property type="term" value="C:chloroplast stroma"/>
    <property type="evidence" value="ECO:0007669"/>
    <property type="project" value="UniProtKB-SubCell"/>
</dbReference>
<dbReference type="GO" id="GO:0050515">
    <property type="term" value="F:4-(cytidine 5'-diphospho)-2-C-methyl-D-erythritol kinase activity"/>
    <property type="evidence" value="ECO:0000318"/>
    <property type="project" value="GO_Central"/>
</dbReference>
<dbReference type="GO" id="GO:0005524">
    <property type="term" value="F:ATP binding"/>
    <property type="evidence" value="ECO:0007669"/>
    <property type="project" value="UniProtKB-KW"/>
</dbReference>
<dbReference type="GO" id="GO:0019288">
    <property type="term" value="P:isopentenyl diphosphate biosynthetic process, methylerythritol 4-phosphate pathway"/>
    <property type="evidence" value="ECO:0007669"/>
    <property type="project" value="UniProtKB-UniPathway"/>
</dbReference>
<dbReference type="GO" id="GO:0016114">
    <property type="term" value="P:terpenoid biosynthetic process"/>
    <property type="evidence" value="ECO:0007669"/>
    <property type="project" value="InterPro"/>
</dbReference>
<dbReference type="FunFam" id="3.30.230.10:FF:000045">
    <property type="entry name" value="4-diphosphocytidyl-2-C-methyl-D-erythritol kinase, chloroplastic"/>
    <property type="match status" value="1"/>
</dbReference>
<dbReference type="FunFam" id="3.30.70.890:FF:000009">
    <property type="entry name" value="4-diphosphocytidyl-2-C-methyl-D-erythritol kinase, chloroplastic"/>
    <property type="match status" value="1"/>
</dbReference>
<dbReference type="Gene3D" id="3.30.230.10">
    <property type="match status" value="1"/>
</dbReference>
<dbReference type="Gene3D" id="3.30.70.890">
    <property type="entry name" value="GHMP kinase, C-terminal domain"/>
    <property type="match status" value="1"/>
</dbReference>
<dbReference type="HAMAP" id="MF_00061">
    <property type="entry name" value="IspE"/>
    <property type="match status" value="1"/>
</dbReference>
<dbReference type="InterPro" id="IPR013750">
    <property type="entry name" value="GHMP_kinase_C_dom"/>
</dbReference>
<dbReference type="InterPro" id="IPR036554">
    <property type="entry name" value="GHMP_kinase_C_sf"/>
</dbReference>
<dbReference type="InterPro" id="IPR006204">
    <property type="entry name" value="GHMP_kinase_N_dom"/>
</dbReference>
<dbReference type="InterPro" id="IPR004424">
    <property type="entry name" value="IspE"/>
</dbReference>
<dbReference type="InterPro" id="IPR020568">
    <property type="entry name" value="Ribosomal_Su5_D2-typ_SF"/>
</dbReference>
<dbReference type="InterPro" id="IPR014721">
    <property type="entry name" value="Ribsml_uS5_D2-typ_fold_subgr"/>
</dbReference>
<dbReference type="NCBIfam" id="TIGR00154">
    <property type="entry name" value="ispE"/>
    <property type="match status" value="1"/>
</dbReference>
<dbReference type="PANTHER" id="PTHR43527">
    <property type="entry name" value="4-DIPHOSPHOCYTIDYL-2-C-METHYL-D-ERYTHRITOL KINASE, CHLOROPLASTIC"/>
    <property type="match status" value="1"/>
</dbReference>
<dbReference type="PANTHER" id="PTHR43527:SF2">
    <property type="entry name" value="4-DIPHOSPHOCYTIDYL-2-C-METHYL-D-ERYTHRITOL KINASE, CHLOROPLASTIC"/>
    <property type="match status" value="1"/>
</dbReference>
<dbReference type="Pfam" id="PF08544">
    <property type="entry name" value="GHMP_kinases_C"/>
    <property type="match status" value="1"/>
</dbReference>
<dbReference type="Pfam" id="PF00288">
    <property type="entry name" value="GHMP_kinases_N"/>
    <property type="match status" value="1"/>
</dbReference>
<dbReference type="SUPFAM" id="SSF55060">
    <property type="entry name" value="GHMP Kinase, C-terminal domain"/>
    <property type="match status" value="1"/>
</dbReference>
<dbReference type="SUPFAM" id="SSF54211">
    <property type="entry name" value="Ribosomal protein S5 domain 2-like"/>
    <property type="match status" value="1"/>
</dbReference>
<accession>Q8S2G0</accession>
<accession>A0A0P0V9H3</accession>
<organism>
    <name type="scientific">Oryza sativa subsp. japonica</name>
    <name type="common">Rice</name>
    <dbReference type="NCBI Taxonomy" id="39947"/>
    <lineage>
        <taxon>Eukaryota</taxon>
        <taxon>Viridiplantae</taxon>
        <taxon>Streptophyta</taxon>
        <taxon>Embryophyta</taxon>
        <taxon>Tracheophyta</taxon>
        <taxon>Spermatophyta</taxon>
        <taxon>Magnoliopsida</taxon>
        <taxon>Liliopsida</taxon>
        <taxon>Poales</taxon>
        <taxon>Poaceae</taxon>
        <taxon>BOP clade</taxon>
        <taxon>Oryzoideae</taxon>
        <taxon>Oryzeae</taxon>
        <taxon>Oryzinae</taxon>
        <taxon>Oryza</taxon>
        <taxon>Oryza sativa</taxon>
    </lineage>
</organism>
<name>ISPE_ORYSJ</name>
<protein>
    <recommendedName>
        <fullName>4-diphosphocytidyl-2-C-methyl-D-erythritol kinase, chloroplastic</fullName>
        <ecNumber>2.7.1.148</ecNumber>
    </recommendedName>
    <alternativeName>
        <fullName>4-(cytidine-5'-diphospho)-2-C-methyl-D-erythritol kinase</fullName>
        <shortName>CDPMEK</shortName>
        <shortName>CMEK</shortName>
    </alternativeName>
</protein>
<reference key="1">
    <citation type="journal article" date="2002" name="Nature">
        <title>The genome sequence and structure of rice chromosome 1.</title>
        <authorList>
            <person name="Sasaki T."/>
            <person name="Matsumoto T."/>
            <person name="Yamamoto K."/>
            <person name="Sakata K."/>
            <person name="Baba T."/>
            <person name="Katayose Y."/>
            <person name="Wu J."/>
            <person name="Niimura Y."/>
            <person name="Cheng Z."/>
            <person name="Nagamura Y."/>
            <person name="Antonio B.A."/>
            <person name="Kanamori H."/>
            <person name="Hosokawa S."/>
            <person name="Masukawa M."/>
            <person name="Arikawa K."/>
            <person name="Chiden Y."/>
            <person name="Hayashi M."/>
            <person name="Okamoto M."/>
            <person name="Ando T."/>
            <person name="Aoki H."/>
            <person name="Arita K."/>
            <person name="Hamada M."/>
            <person name="Harada C."/>
            <person name="Hijishita S."/>
            <person name="Honda M."/>
            <person name="Ichikawa Y."/>
            <person name="Idonuma A."/>
            <person name="Iijima M."/>
            <person name="Ikeda M."/>
            <person name="Ikeno M."/>
            <person name="Ito S."/>
            <person name="Ito T."/>
            <person name="Ito Y."/>
            <person name="Ito Y."/>
            <person name="Iwabuchi A."/>
            <person name="Kamiya K."/>
            <person name="Karasawa W."/>
            <person name="Katagiri S."/>
            <person name="Kikuta A."/>
            <person name="Kobayashi N."/>
            <person name="Kono I."/>
            <person name="Machita K."/>
            <person name="Maehara T."/>
            <person name="Mizuno H."/>
            <person name="Mizubayashi T."/>
            <person name="Mukai Y."/>
            <person name="Nagasaki H."/>
            <person name="Nakashima M."/>
            <person name="Nakama Y."/>
            <person name="Nakamichi Y."/>
            <person name="Nakamura M."/>
            <person name="Namiki N."/>
            <person name="Negishi M."/>
            <person name="Ohta I."/>
            <person name="Ono N."/>
            <person name="Saji S."/>
            <person name="Sakai K."/>
            <person name="Shibata M."/>
            <person name="Shimokawa T."/>
            <person name="Shomura A."/>
            <person name="Song J."/>
            <person name="Takazaki Y."/>
            <person name="Terasawa K."/>
            <person name="Tsuji K."/>
            <person name="Waki K."/>
            <person name="Yamagata H."/>
            <person name="Yamane H."/>
            <person name="Yoshiki S."/>
            <person name="Yoshihara R."/>
            <person name="Yukawa K."/>
            <person name="Zhong H."/>
            <person name="Iwama H."/>
            <person name="Endo T."/>
            <person name="Ito H."/>
            <person name="Hahn J.H."/>
            <person name="Kim H.-I."/>
            <person name="Eun M.-Y."/>
            <person name="Yano M."/>
            <person name="Jiang J."/>
            <person name="Gojobori T."/>
        </authorList>
    </citation>
    <scope>NUCLEOTIDE SEQUENCE [LARGE SCALE GENOMIC DNA]</scope>
    <source>
        <strain>cv. Nipponbare</strain>
    </source>
</reference>
<reference key="2">
    <citation type="journal article" date="2005" name="Nature">
        <title>The map-based sequence of the rice genome.</title>
        <authorList>
            <consortium name="International rice genome sequencing project (IRGSP)"/>
        </authorList>
    </citation>
    <scope>NUCLEOTIDE SEQUENCE [LARGE SCALE GENOMIC DNA]</scope>
    <source>
        <strain>cv. Nipponbare</strain>
    </source>
</reference>
<reference key="3">
    <citation type="journal article" date="2008" name="Nucleic Acids Res.">
        <title>The rice annotation project database (RAP-DB): 2008 update.</title>
        <authorList>
            <consortium name="The rice annotation project (RAP)"/>
        </authorList>
    </citation>
    <scope>GENOME REANNOTATION</scope>
    <source>
        <strain>cv. Nipponbare</strain>
    </source>
</reference>
<reference key="4">
    <citation type="journal article" date="2013" name="Rice">
        <title>Improvement of the Oryza sativa Nipponbare reference genome using next generation sequence and optical map data.</title>
        <authorList>
            <person name="Kawahara Y."/>
            <person name="de la Bastide M."/>
            <person name="Hamilton J.P."/>
            <person name="Kanamori H."/>
            <person name="McCombie W.R."/>
            <person name="Ouyang S."/>
            <person name="Schwartz D.C."/>
            <person name="Tanaka T."/>
            <person name="Wu J."/>
            <person name="Zhou S."/>
            <person name="Childs K.L."/>
            <person name="Davidson R.M."/>
            <person name="Lin H."/>
            <person name="Quesada-Ocampo L."/>
            <person name="Vaillancourt B."/>
            <person name="Sakai H."/>
            <person name="Lee S.S."/>
            <person name="Kim J."/>
            <person name="Numa H."/>
            <person name="Itoh T."/>
            <person name="Buell C.R."/>
            <person name="Matsumoto T."/>
        </authorList>
    </citation>
    <scope>GENOME REANNOTATION</scope>
    <source>
        <strain>cv. Nipponbare</strain>
    </source>
</reference>
<reference key="5">
    <citation type="journal article" date="2005" name="PLoS Biol.">
        <title>The genomes of Oryza sativa: a history of duplications.</title>
        <authorList>
            <person name="Yu J."/>
            <person name="Wang J."/>
            <person name="Lin W."/>
            <person name="Li S."/>
            <person name="Li H."/>
            <person name="Zhou J."/>
            <person name="Ni P."/>
            <person name="Dong W."/>
            <person name="Hu S."/>
            <person name="Zeng C."/>
            <person name="Zhang J."/>
            <person name="Zhang Y."/>
            <person name="Li R."/>
            <person name="Xu Z."/>
            <person name="Li S."/>
            <person name="Li X."/>
            <person name="Zheng H."/>
            <person name="Cong L."/>
            <person name="Lin L."/>
            <person name="Yin J."/>
            <person name="Geng J."/>
            <person name="Li G."/>
            <person name="Shi J."/>
            <person name="Liu J."/>
            <person name="Lv H."/>
            <person name="Li J."/>
            <person name="Wang J."/>
            <person name="Deng Y."/>
            <person name="Ran L."/>
            <person name="Shi X."/>
            <person name="Wang X."/>
            <person name="Wu Q."/>
            <person name="Li C."/>
            <person name="Ren X."/>
            <person name="Wang J."/>
            <person name="Wang X."/>
            <person name="Li D."/>
            <person name="Liu D."/>
            <person name="Zhang X."/>
            <person name="Ji Z."/>
            <person name="Zhao W."/>
            <person name="Sun Y."/>
            <person name="Zhang Z."/>
            <person name="Bao J."/>
            <person name="Han Y."/>
            <person name="Dong L."/>
            <person name="Ji J."/>
            <person name="Chen P."/>
            <person name="Wu S."/>
            <person name="Liu J."/>
            <person name="Xiao Y."/>
            <person name="Bu D."/>
            <person name="Tan J."/>
            <person name="Yang L."/>
            <person name="Ye C."/>
            <person name="Zhang J."/>
            <person name="Xu J."/>
            <person name="Zhou Y."/>
            <person name="Yu Y."/>
            <person name="Zhang B."/>
            <person name="Zhuang S."/>
            <person name="Wei H."/>
            <person name="Liu B."/>
            <person name="Lei M."/>
            <person name="Yu H."/>
            <person name="Li Y."/>
            <person name="Xu H."/>
            <person name="Wei S."/>
            <person name="He X."/>
            <person name="Fang L."/>
            <person name="Zhang Z."/>
            <person name="Zhang Y."/>
            <person name="Huang X."/>
            <person name="Su Z."/>
            <person name="Tong W."/>
            <person name="Li J."/>
            <person name="Tong Z."/>
            <person name="Li S."/>
            <person name="Ye J."/>
            <person name="Wang L."/>
            <person name="Fang L."/>
            <person name="Lei T."/>
            <person name="Chen C.-S."/>
            <person name="Chen H.-C."/>
            <person name="Xu Z."/>
            <person name="Li H."/>
            <person name="Huang H."/>
            <person name="Zhang F."/>
            <person name="Xu H."/>
            <person name="Li N."/>
            <person name="Zhao C."/>
            <person name="Li S."/>
            <person name="Dong L."/>
            <person name="Huang Y."/>
            <person name="Li L."/>
            <person name="Xi Y."/>
            <person name="Qi Q."/>
            <person name="Li W."/>
            <person name="Zhang B."/>
            <person name="Hu W."/>
            <person name="Zhang Y."/>
            <person name="Tian X."/>
            <person name="Jiao Y."/>
            <person name="Liang X."/>
            <person name="Jin J."/>
            <person name="Gao L."/>
            <person name="Zheng W."/>
            <person name="Hao B."/>
            <person name="Liu S.-M."/>
            <person name="Wang W."/>
            <person name="Yuan L."/>
            <person name="Cao M."/>
            <person name="McDermott J."/>
            <person name="Samudrala R."/>
            <person name="Wang J."/>
            <person name="Wong G.K.-S."/>
            <person name="Yang H."/>
        </authorList>
    </citation>
    <scope>NUCLEOTIDE SEQUENCE [LARGE SCALE GENOMIC DNA]</scope>
    <source>
        <strain>cv. Nipponbare</strain>
    </source>
</reference>
<reference key="6">
    <citation type="journal article" date="2003" name="Science">
        <title>Collection, mapping, and annotation of over 28,000 cDNA clones from japonica rice.</title>
        <authorList>
            <consortium name="The rice full-length cDNA consortium"/>
        </authorList>
    </citation>
    <scope>NUCLEOTIDE SEQUENCE [LARGE SCALE MRNA]</scope>
    <source>
        <strain>cv. Nipponbare</strain>
    </source>
</reference>
<proteinExistence type="evidence at transcript level"/>
<gene>
    <name type="primary">ISPE</name>
    <name type="ordered locus">Os01g0802100</name>
    <name type="ordered locus">LOC_Os01g58790</name>
    <name type="ORF">OsJ_01815</name>
    <name type="ORF">P0003D09.29</name>
</gene>